<gene>
    <name evidence="2" type="primary">Lire1</name>
</gene>
<proteinExistence type="evidence at protein level"/>
<reference key="1">
    <citation type="journal article" date="1986" name="Mol. Cell. Biol.">
        <title>The sequence of a large L1Md element reveals a tandemly repeated 5' end and several features found in retrotransposons.</title>
        <authorList>
            <person name="Loeb D.D."/>
            <person name="Padgett R.W."/>
            <person name="Hardies S.C."/>
            <person name="Shehee W.R."/>
            <person name="Comer M.B."/>
            <person name="Edgell M.H."/>
            <person name="Hutchison C.A. III"/>
        </authorList>
    </citation>
    <scope>NUCLEOTIDE SEQUENCE [GENOMIC DNA]</scope>
</reference>
<reference key="2">
    <citation type="journal article" date="2001" name="Genome Res.">
        <title>A novel active L1 retrotransposon subfamily in the mouse.</title>
        <authorList>
            <person name="Goodier J.L."/>
            <person name="Ostertag E.M."/>
            <person name="Du K."/>
            <person name="Kazazian H.H. Jr."/>
        </authorList>
    </citation>
    <scope>NUCLEOTIDE SEQUENCE [MRNA]</scope>
</reference>
<reference key="3">
    <citation type="journal article" date="2001" name="Mol. Cell. Biol.">
        <title>Nucleic acid chaperone activity of the ORF1 protein from the mouse LINE-1 retrotransposon.</title>
        <authorList>
            <person name="Martin S.L."/>
            <person name="Bushman F.D."/>
        </authorList>
    </citation>
    <scope>FUNCTION</scope>
</reference>
<reference key="4">
    <citation type="journal article" date="2003" name="Proc. Natl. Acad. Sci. U.S.A.">
        <title>Trimeric structure for an essential protein in L1 retrotransposition.</title>
        <authorList>
            <person name="Martin S.L."/>
            <person name="Branciforte D."/>
            <person name="Keller D."/>
            <person name="Bain D.L."/>
        </authorList>
    </citation>
    <scope>SUBUNIT</scope>
</reference>
<reference key="5">
    <citation type="journal article" date="2017" name="BMC Biol.">
        <title>Mov10 suppresses retroelements and regulates neuronal development and function in the developing brain.</title>
        <authorList>
            <person name="Skariah G."/>
            <person name="Seimetz J."/>
            <person name="Norsworthy M."/>
            <person name="Lannom M.C."/>
            <person name="Kenny P.J."/>
            <person name="Elrakhawy M."/>
            <person name="Forsthoefel C."/>
            <person name="Drnevich J."/>
            <person name="Kalsotra A."/>
            <person name="Ceman S."/>
        </authorList>
    </citation>
    <scope>INTERACTION WITH MOV10</scope>
</reference>
<reference key="6">
    <citation type="journal article" date="2017" name="Elife">
        <title>Mobilization of LINE-1 retrotransposons is restricted by Tex19.1 in mouse embryonic stem cells.</title>
        <authorList>
            <person name="MacLennan M."/>
            <person name="Garcia-Canadas M."/>
            <person name="Reichmann J."/>
            <person name="Khazina E."/>
            <person name="Wagner G."/>
            <person name="Playfoot C.J."/>
            <person name="Salvador-Palomeque C."/>
            <person name="Mann A.R."/>
            <person name="Peressini P."/>
            <person name="Sanchez L."/>
            <person name="Dobie K."/>
            <person name="Read D."/>
            <person name="Hung C.C."/>
            <person name="Eskeland R."/>
            <person name="Meehan R.R."/>
            <person name="Weichenrieder O."/>
            <person name="Garcia-Perez J.L."/>
            <person name="Adams I.R."/>
        </authorList>
    </citation>
    <scope>FUNCTION</scope>
    <scope>INTERACTION WITH TEX19.1 AND UBR2</scope>
    <scope>UBIQUITINATION</scope>
    <scope>TISSUE SPECIFICITY</scope>
    <scope>SUBCELLULAR LOCATION</scope>
</reference>
<reference key="7">
    <citation type="journal article" date="2007" name="J. Biol. Chem.">
        <title>Identification and solution structure of a highly conserved C-terminal domain within ORF1p required for retrotransposition of long interspersed nuclear element-1.</title>
        <authorList>
            <person name="Januszyk K."/>
            <person name="Li P.W."/>
            <person name="Villareal V."/>
            <person name="Branciforte D."/>
            <person name="Wu H."/>
            <person name="Xie Y."/>
            <person name="Feigon J."/>
            <person name="Loo J.A."/>
            <person name="Martin S.L."/>
            <person name="Clubb R.T."/>
        </authorList>
    </citation>
    <scope>STRUCTURE BY NMR OF 261-347</scope>
    <scope>RNA-BINDING REGION</scope>
</reference>
<comment type="function">
    <text evidence="5 8">Nucleic acid-binding protein which is essential for retrotransposition of LINE-1 elements in the genome. Functions as a nucleic acid chaperone binding its own transcript and therefore preferentially mobilizing the transcript from which they are encoded.</text>
</comment>
<comment type="subunit">
    <text evidence="6 7 8">Homotrimer (via coiled coil domain). May also form larger homooligomers. Interacts with Tex19.1 and UBR2 (PubMed:28806172). Interacts with MOV10 (PubMed:28662698).</text>
</comment>
<comment type="subcellular location">
    <subcellularLocation>
        <location evidence="2">Nucleus</location>
        <location evidence="2">Nucleolus</location>
    </subcellularLocation>
    <subcellularLocation>
        <location evidence="8">Cytoplasm</location>
    </subcellularLocation>
    <subcellularLocation>
        <location evidence="2">Cytoplasm</location>
        <location evidence="2">Cytoplasmic ribonucleoprotein granule</location>
    </subcellularLocation>
    <subcellularLocation>
        <location evidence="2">Cytoplasm</location>
        <location evidence="2">Stress granule</location>
    </subcellularLocation>
    <text evidence="2">Colocalizes with its encoding RNA in cytoplasmic ribonucleoprotein particle. Mainly cytoplasmic, rarely detected in the nucleus, possibly within the nucleolus.</text>
</comment>
<comment type="tissue specificity">
    <text evidence="8">Expressed in meiotic spermatocytes and in the cerebellum (at protein level).</text>
</comment>
<comment type="domain">
    <text evidence="1">The coiled coil domain mediates homotrimerization.</text>
</comment>
<comment type="domain">
    <text>The RRM and the CTD domain are both required for proper RNA-binding activity.</text>
</comment>
<comment type="PTM">
    <text evidence="8">Polyubiquitinated, probably by UBR2, which induces its degradation.</text>
</comment>
<comment type="miscellaneous">
    <text>An active LINE-1 encodes for 2 proteins translated from a single RNA containing two non-overlapping ORFs, ORF1 and ORF2. ORF1p is described in that entry as a representative of all ORF1p potentially expressed by active elements in mouse genome. ORF2p is described in the related entry AC P11369.</text>
</comment>
<comment type="similarity">
    <text evidence="10">Belongs to the transposase 22 family.</text>
</comment>
<organism>
    <name type="scientific">Mus musculus</name>
    <name type="common">Mouse</name>
    <dbReference type="NCBI Taxonomy" id="10090"/>
    <lineage>
        <taxon>Eukaryota</taxon>
        <taxon>Metazoa</taxon>
        <taxon>Chordata</taxon>
        <taxon>Craniata</taxon>
        <taxon>Vertebrata</taxon>
        <taxon>Euteleostomi</taxon>
        <taxon>Mammalia</taxon>
        <taxon>Eutheria</taxon>
        <taxon>Euarchontoglires</taxon>
        <taxon>Glires</taxon>
        <taxon>Rodentia</taxon>
        <taxon>Myomorpha</taxon>
        <taxon>Muroidea</taxon>
        <taxon>Muridae</taxon>
        <taxon>Murinae</taxon>
        <taxon>Mus</taxon>
        <taxon>Mus</taxon>
    </lineage>
</organism>
<feature type="chain" id="PRO_0000066358" description="LINE-1 retrotransposable element ORF1 protein">
    <location>
        <begin position="1"/>
        <end position="357"/>
    </location>
</feature>
<feature type="region of interest" description="Disordered" evidence="4">
    <location>
        <begin position="1"/>
        <end position="40"/>
    </location>
</feature>
<feature type="region of interest" description="RNA recognition motif (RRM) domain" evidence="1">
    <location>
        <begin position="179"/>
        <end position="274"/>
    </location>
</feature>
<feature type="region of interest" description="C-terminal domain (CTD)">
    <location>
        <begin position="278"/>
        <end position="339"/>
    </location>
</feature>
<feature type="coiled-coil region" evidence="3">
    <location>
        <begin position="59"/>
        <end position="156"/>
    </location>
</feature>
<feature type="turn" evidence="11">
    <location>
        <begin position="276"/>
        <end position="278"/>
    </location>
</feature>
<feature type="helix" evidence="11">
    <location>
        <begin position="279"/>
        <end position="293"/>
    </location>
</feature>
<feature type="turn" evidence="11">
    <location>
        <begin position="294"/>
        <end position="297"/>
    </location>
</feature>
<feature type="strand" evidence="11">
    <location>
        <begin position="301"/>
        <end position="303"/>
    </location>
</feature>
<feature type="turn" evidence="11">
    <location>
        <begin position="304"/>
        <end position="306"/>
    </location>
</feature>
<feature type="strand" evidence="11">
    <location>
        <begin position="307"/>
        <end position="314"/>
    </location>
</feature>
<feature type="strand" evidence="11">
    <location>
        <begin position="316"/>
        <end position="321"/>
    </location>
</feature>
<feature type="helix" evidence="11">
    <location>
        <begin position="322"/>
        <end position="330"/>
    </location>
</feature>
<feature type="helix" evidence="11">
    <location>
        <begin position="333"/>
        <end position="338"/>
    </location>
</feature>
<dbReference type="EMBL" id="M13002">
    <property type="protein sequence ID" value="AAA66023.1"/>
    <property type="molecule type" value="Genomic_DNA"/>
</dbReference>
<dbReference type="EMBL" id="AY053455">
    <property type="protein sequence ID" value="AAL17969.1"/>
    <property type="molecule type" value="mRNA"/>
</dbReference>
<dbReference type="EMBL" id="AY053456">
    <property type="protein sequence ID" value="AAL17971.1"/>
    <property type="molecule type" value="mRNA"/>
</dbReference>
<dbReference type="PIR" id="A58927">
    <property type="entry name" value="QQMSLL"/>
</dbReference>
<dbReference type="PDB" id="2JRB">
    <property type="method" value="NMR"/>
    <property type="chains" value="A=261-347"/>
</dbReference>
<dbReference type="PDBsum" id="2JRB"/>
<dbReference type="BMRB" id="P11260"/>
<dbReference type="SMR" id="P11260"/>
<dbReference type="FunCoup" id="P11260">
    <property type="interactions" value="19"/>
</dbReference>
<dbReference type="GlyGen" id="P11260">
    <property type="glycosylation" value="1 site"/>
</dbReference>
<dbReference type="PhosphoSitePlus" id="P11260"/>
<dbReference type="PeptideAtlas" id="P11260"/>
<dbReference type="ProteomicsDB" id="291964"/>
<dbReference type="InParanoid" id="P11260"/>
<dbReference type="EvolutionaryTrace" id="P11260"/>
<dbReference type="Proteomes" id="UP000000589">
    <property type="component" value="Unplaced"/>
</dbReference>
<dbReference type="RNAct" id="P11260">
    <property type="molecule type" value="protein"/>
</dbReference>
<dbReference type="GO" id="GO:0005737">
    <property type="term" value="C:cytoplasm"/>
    <property type="evidence" value="ECO:0000314"/>
    <property type="project" value="UniProtKB"/>
</dbReference>
<dbReference type="GO" id="GO:0036464">
    <property type="term" value="C:cytoplasmic ribonucleoprotein granule"/>
    <property type="evidence" value="ECO:0000250"/>
    <property type="project" value="UniProtKB"/>
</dbReference>
<dbReference type="GO" id="GO:0010494">
    <property type="term" value="C:cytoplasmic stress granule"/>
    <property type="evidence" value="ECO:0007669"/>
    <property type="project" value="UniProtKB-SubCell"/>
</dbReference>
<dbReference type="GO" id="GO:0005730">
    <property type="term" value="C:nucleolus"/>
    <property type="evidence" value="ECO:0007669"/>
    <property type="project" value="UniProtKB-SubCell"/>
</dbReference>
<dbReference type="GO" id="GO:1990904">
    <property type="term" value="C:ribonucleoprotein complex"/>
    <property type="evidence" value="ECO:0000318"/>
    <property type="project" value="GO_Central"/>
</dbReference>
<dbReference type="GO" id="GO:0000166">
    <property type="term" value="F:nucleotide binding"/>
    <property type="evidence" value="ECO:0007669"/>
    <property type="project" value="UniProtKB-KW"/>
</dbReference>
<dbReference type="GO" id="GO:0003727">
    <property type="term" value="F:single-stranded RNA binding"/>
    <property type="evidence" value="ECO:0000318"/>
    <property type="project" value="GO_Central"/>
</dbReference>
<dbReference type="GO" id="GO:0032197">
    <property type="term" value="P:retrotransposition"/>
    <property type="evidence" value="ECO:0000315"/>
    <property type="project" value="UniProtKB"/>
</dbReference>
<dbReference type="FunFam" id="3.30.250.20:FF:000004">
    <property type="entry name" value="L1 transposable element"/>
    <property type="match status" value="1"/>
</dbReference>
<dbReference type="FunFam" id="1.20.5.390:FF:000005">
    <property type="entry name" value="LINE-1 retrotransposable element ORF1 protein"/>
    <property type="match status" value="1"/>
</dbReference>
<dbReference type="FunFam" id="3.30.70.1820:FF:000002">
    <property type="entry name" value="LINE-1 retrotransposable element ORF1 protein"/>
    <property type="match status" value="1"/>
</dbReference>
<dbReference type="Gene3D" id="3.30.250.20">
    <property type="entry name" value="L1 transposable element, C-terminal domain"/>
    <property type="match status" value="1"/>
</dbReference>
<dbReference type="Gene3D" id="3.30.70.1820">
    <property type="entry name" value="L1 transposable element, RRM domain"/>
    <property type="match status" value="1"/>
</dbReference>
<dbReference type="Gene3D" id="1.20.5.390">
    <property type="entry name" value="L1 transposable element, trimerization domain"/>
    <property type="match status" value="1"/>
</dbReference>
<dbReference type="InterPro" id="IPR042566">
    <property type="entry name" value="L1_C"/>
</dbReference>
<dbReference type="InterPro" id="IPR035300">
    <property type="entry name" value="L1_dsRBD"/>
</dbReference>
<dbReference type="InterPro" id="IPR043636">
    <property type="entry name" value="L1_RRM_dom"/>
</dbReference>
<dbReference type="InterPro" id="IPR004244">
    <property type="entry name" value="Transposase_22"/>
</dbReference>
<dbReference type="PANTHER" id="PTHR11505">
    <property type="entry name" value="L1 TRANSPOSABLE ELEMENT-RELATED"/>
    <property type="match status" value="1"/>
</dbReference>
<dbReference type="Pfam" id="PF17490">
    <property type="entry name" value="Tnp_22_dsRBD"/>
    <property type="match status" value="1"/>
</dbReference>
<dbReference type="Pfam" id="PF02994">
    <property type="entry name" value="Transposase_22"/>
    <property type="match status" value="1"/>
</dbReference>
<name>LORF1_MOUSE</name>
<evidence type="ECO:0000250" key="1"/>
<evidence type="ECO:0000250" key="2">
    <source>
        <dbReference type="UniProtKB" id="Q9UN81"/>
    </source>
</evidence>
<evidence type="ECO:0000255" key="3"/>
<evidence type="ECO:0000256" key="4">
    <source>
        <dbReference type="SAM" id="MobiDB-lite"/>
    </source>
</evidence>
<evidence type="ECO:0000269" key="5">
    <source>
    </source>
</evidence>
<evidence type="ECO:0000269" key="6">
    <source>
    </source>
</evidence>
<evidence type="ECO:0000269" key="7">
    <source>
    </source>
</evidence>
<evidence type="ECO:0000269" key="8">
    <source>
    </source>
</evidence>
<evidence type="ECO:0000303" key="9">
    <source>
    </source>
</evidence>
<evidence type="ECO:0000305" key="10"/>
<evidence type="ECO:0007829" key="11">
    <source>
        <dbReference type="PDB" id="2JRB"/>
    </source>
</evidence>
<keyword id="KW-0002">3D-structure</keyword>
<keyword id="KW-0175">Coiled coil</keyword>
<keyword id="KW-0963">Cytoplasm</keyword>
<keyword id="KW-0547">Nucleotide-binding</keyword>
<keyword id="KW-0539">Nucleus</keyword>
<keyword id="KW-1185">Reference proteome</keyword>
<keyword id="KW-0832">Ubl conjugation</keyword>
<sequence length="357" mass="41226">MAKGKRKNPTNRNQDHSPSSERSTPTPPSPGHPNTTENLDPDLKTFLMMMIEDIKKDFHKSLKDLQESTAKELQALKEKQENTAKQVMEMNKTILELKGEVDTIKKTQSEATLEIETLGKRSGTIDASISNRIQEMEERISGAEDSIENIDTTVKENTKCKRILTQNIQVIQDTMRRPNLRIIGIDENEDFQLKGPANIFNKIIEENFPNIKKEMPMIIQEAYRTPNRLDQKRNSSRHIIIRTTNALNKDRILKAVREKGQVTYKGRPIRITPDFSPETMKARRAWTDVIQTLREHKCQPRLLYPAKLSITIDGETKVFHDKTKFTQYLSTNPALQRIITEKKQYKDGNHALEQPRK</sequence>
<protein>
    <recommendedName>
        <fullName evidence="10">LINE-1 retrotransposable element ORF1 protein</fullName>
        <shortName evidence="9">L1-ORF1p</shortName>
    </recommendedName>
    <alternativeName>
        <fullName>LINE retrotransposable element 1</fullName>
    </alternativeName>
    <alternativeName>
        <fullName>LINE1 retrotransposable element 1</fullName>
    </alternativeName>
    <alternativeName>
        <fullName>Transposase element L1Md-A101/L1Md-A102/L1Md-A2</fullName>
    </alternativeName>
</protein>
<accession>P11260</accession>
<accession>Q91V68</accession>